<comment type="function">
    <text evidence="1">Converts heme B (protoheme IX) to heme O by substitution of the vinyl group on carbon 2 of heme B porphyrin ring with a hydroxyethyl farnesyl side group.</text>
</comment>
<comment type="catalytic activity">
    <reaction evidence="1">
        <text>heme b + (2E,6E)-farnesyl diphosphate + H2O = Fe(II)-heme o + diphosphate</text>
        <dbReference type="Rhea" id="RHEA:28070"/>
        <dbReference type="ChEBI" id="CHEBI:15377"/>
        <dbReference type="ChEBI" id="CHEBI:33019"/>
        <dbReference type="ChEBI" id="CHEBI:60344"/>
        <dbReference type="ChEBI" id="CHEBI:60530"/>
        <dbReference type="ChEBI" id="CHEBI:175763"/>
        <dbReference type="EC" id="2.5.1.141"/>
    </reaction>
</comment>
<comment type="pathway">
    <text evidence="1">Porphyrin-containing compound metabolism; heme O biosynthesis; heme O from protoheme: step 1/1.</text>
</comment>
<comment type="subunit">
    <text evidence="1">Interacts with CtaA.</text>
</comment>
<comment type="subcellular location">
    <subcellularLocation>
        <location evidence="1">Cell membrane</location>
        <topology evidence="1">Multi-pass membrane protein</topology>
    </subcellularLocation>
</comment>
<comment type="miscellaneous">
    <text evidence="1">Carbon 2 of the heme B porphyrin ring is defined according to the Fischer nomenclature.</text>
</comment>
<comment type="similarity">
    <text evidence="1">Belongs to the UbiA prenyltransferase family. Protoheme IX farnesyltransferase subfamily.</text>
</comment>
<protein>
    <recommendedName>
        <fullName evidence="1">Protoheme IX farnesyltransferase</fullName>
        <ecNumber evidence="1">2.5.1.141</ecNumber>
    </recommendedName>
    <alternativeName>
        <fullName evidence="1">Heme B farnesyltransferase</fullName>
    </alternativeName>
    <alternativeName>
        <fullName evidence="1">Heme O synthase</fullName>
    </alternativeName>
</protein>
<keyword id="KW-1003">Cell membrane</keyword>
<keyword id="KW-0350">Heme biosynthesis</keyword>
<keyword id="KW-0472">Membrane</keyword>
<keyword id="KW-1185">Reference proteome</keyword>
<keyword id="KW-0808">Transferase</keyword>
<keyword id="KW-0812">Transmembrane</keyword>
<keyword id="KW-1133">Transmembrane helix</keyword>
<evidence type="ECO:0000255" key="1">
    <source>
        <dbReference type="HAMAP-Rule" id="MF_00154"/>
    </source>
</evidence>
<proteinExistence type="inferred from homology"/>
<sequence length="310" mass="34630">MAKVNGETLDIMIEQSDQPTFKDYVTLAKMGIVRANLITVFAGYVVAASYLTDDVLLYLWQTKLTLLWTLLGSGLVIAGSCYLNNYIDRDIDYKMERTMGRPSVTGKMDGQRILALGLGILATGTVLLLIVNHVAAVFGLIGSFVYVVIYTMWLKRTHTINTVVGGISGAVPPIIGFAAVTPTLHIDAWILFLIMFVWQPPHFLALAMRRTEEYRAAGIPMLPVVNGFAITKRQIVWWIAVLLPSSLLLAHYGIIYMLVMAVLGGYWLYMGLKGLKIKEEQAEIKWASKMFFFSLFYFTAWIVTVVLVSL</sequence>
<organism>
    <name type="scientific">Exiguobacterium sibiricum (strain DSM 17290 / CCUG 55495 / CIP 109462 / JCM 13490 / 255-15)</name>
    <dbReference type="NCBI Taxonomy" id="262543"/>
    <lineage>
        <taxon>Bacteria</taxon>
        <taxon>Bacillati</taxon>
        <taxon>Bacillota</taxon>
        <taxon>Bacilli</taxon>
        <taxon>Bacillales</taxon>
        <taxon>Bacillales Family XII. Incertae Sedis</taxon>
        <taxon>Exiguobacterium</taxon>
    </lineage>
</organism>
<dbReference type="EC" id="2.5.1.141" evidence="1"/>
<dbReference type="EMBL" id="CP001022">
    <property type="protein sequence ID" value="ACB61441.1"/>
    <property type="molecule type" value="Genomic_DNA"/>
</dbReference>
<dbReference type="SMR" id="B1YIW5"/>
<dbReference type="STRING" id="262543.Exig_1989"/>
<dbReference type="KEGG" id="esi:Exig_1989"/>
<dbReference type="eggNOG" id="COG0109">
    <property type="taxonomic scope" value="Bacteria"/>
</dbReference>
<dbReference type="HOGENOM" id="CLU_029631_0_0_9"/>
<dbReference type="OrthoDB" id="9814417at2"/>
<dbReference type="UniPathway" id="UPA00834">
    <property type="reaction ID" value="UER00712"/>
</dbReference>
<dbReference type="Proteomes" id="UP000001681">
    <property type="component" value="Chromosome"/>
</dbReference>
<dbReference type="GO" id="GO:0005886">
    <property type="term" value="C:plasma membrane"/>
    <property type="evidence" value="ECO:0007669"/>
    <property type="project" value="UniProtKB-SubCell"/>
</dbReference>
<dbReference type="GO" id="GO:0008495">
    <property type="term" value="F:protoheme IX farnesyltransferase activity"/>
    <property type="evidence" value="ECO:0007669"/>
    <property type="project" value="UniProtKB-UniRule"/>
</dbReference>
<dbReference type="GO" id="GO:0048034">
    <property type="term" value="P:heme O biosynthetic process"/>
    <property type="evidence" value="ECO:0007669"/>
    <property type="project" value="UniProtKB-UniRule"/>
</dbReference>
<dbReference type="CDD" id="cd13957">
    <property type="entry name" value="PT_UbiA_Cox10"/>
    <property type="match status" value="1"/>
</dbReference>
<dbReference type="Gene3D" id="1.10.357.140">
    <property type="entry name" value="UbiA prenyltransferase"/>
    <property type="match status" value="1"/>
</dbReference>
<dbReference type="HAMAP" id="MF_00154">
    <property type="entry name" value="CyoE_CtaB"/>
    <property type="match status" value="1"/>
</dbReference>
<dbReference type="InterPro" id="IPR006369">
    <property type="entry name" value="Protohaem_IX_farnesylTrfase"/>
</dbReference>
<dbReference type="InterPro" id="IPR000537">
    <property type="entry name" value="UbiA_prenyltransferase"/>
</dbReference>
<dbReference type="InterPro" id="IPR030470">
    <property type="entry name" value="UbiA_prenylTrfase_CS"/>
</dbReference>
<dbReference type="InterPro" id="IPR044878">
    <property type="entry name" value="UbiA_sf"/>
</dbReference>
<dbReference type="NCBIfam" id="TIGR01473">
    <property type="entry name" value="cyoE_ctaB"/>
    <property type="match status" value="1"/>
</dbReference>
<dbReference type="PANTHER" id="PTHR43448">
    <property type="entry name" value="PROTOHEME IX FARNESYLTRANSFERASE, MITOCHONDRIAL"/>
    <property type="match status" value="1"/>
</dbReference>
<dbReference type="PANTHER" id="PTHR43448:SF2">
    <property type="entry name" value="PROTOHEME IX FARNESYLTRANSFERASE, MITOCHONDRIAL"/>
    <property type="match status" value="1"/>
</dbReference>
<dbReference type="Pfam" id="PF01040">
    <property type="entry name" value="UbiA"/>
    <property type="match status" value="1"/>
</dbReference>
<dbReference type="PROSITE" id="PS00943">
    <property type="entry name" value="UBIA"/>
    <property type="match status" value="1"/>
</dbReference>
<name>COXX_EXIS2</name>
<reference key="1">
    <citation type="submission" date="2008-04" db="EMBL/GenBank/DDBJ databases">
        <title>Complete sequence of chromosome of Exiguobacterium sibiricum 255-15.</title>
        <authorList>
            <consortium name="US DOE Joint Genome Institute"/>
            <person name="Copeland A."/>
            <person name="Lucas S."/>
            <person name="Lapidus A."/>
            <person name="Glavina del Rio T."/>
            <person name="Dalin E."/>
            <person name="Tice H."/>
            <person name="Bruce D."/>
            <person name="Goodwin L."/>
            <person name="Pitluck S."/>
            <person name="Kiss H."/>
            <person name="Chertkov O."/>
            <person name="Monk C."/>
            <person name="Brettin T."/>
            <person name="Detter J.C."/>
            <person name="Han C."/>
            <person name="Kuske C.R."/>
            <person name="Schmutz J."/>
            <person name="Larimer F."/>
            <person name="Land M."/>
            <person name="Hauser L."/>
            <person name="Kyrpides N."/>
            <person name="Mikhailova N."/>
            <person name="Vishnivetskaya T."/>
            <person name="Rodrigues D.F."/>
            <person name="Gilichinsky D."/>
            <person name="Tiedje J."/>
            <person name="Richardson P."/>
        </authorList>
    </citation>
    <scope>NUCLEOTIDE SEQUENCE [LARGE SCALE GENOMIC DNA]</scope>
    <source>
        <strain>DSM 17290 / CCUG 55495 / CIP 109462 / JCM 13490 / 255-15</strain>
    </source>
</reference>
<accession>B1YIW5</accession>
<feature type="chain" id="PRO_0000346044" description="Protoheme IX farnesyltransferase">
    <location>
        <begin position="1"/>
        <end position="310"/>
    </location>
</feature>
<feature type="transmembrane region" description="Helical" evidence="1">
    <location>
        <begin position="37"/>
        <end position="57"/>
    </location>
</feature>
<feature type="transmembrane region" description="Helical" evidence="1">
    <location>
        <begin position="64"/>
        <end position="84"/>
    </location>
</feature>
<feature type="transmembrane region" description="Helical" evidence="1">
    <location>
        <begin position="113"/>
        <end position="133"/>
    </location>
</feature>
<feature type="transmembrane region" description="Helical" evidence="1">
    <location>
        <begin position="134"/>
        <end position="154"/>
    </location>
</feature>
<feature type="transmembrane region" description="Helical" evidence="1">
    <location>
        <begin position="159"/>
        <end position="181"/>
    </location>
</feature>
<feature type="transmembrane region" description="Helical" evidence="1">
    <location>
        <begin position="186"/>
        <end position="208"/>
    </location>
</feature>
<feature type="transmembrane region" description="Helical" evidence="1">
    <location>
        <begin position="215"/>
        <end position="237"/>
    </location>
</feature>
<feature type="transmembrane region" description="Helical" evidence="1">
    <location>
        <begin position="257"/>
        <end position="277"/>
    </location>
</feature>
<feature type="transmembrane region" description="Helical" evidence="1">
    <location>
        <begin position="290"/>
        <end position="310"/>
    </location>
</feature>
<gene>
    <name evidence="1" type="primary">ctaB</name>
    <name type="ordered locus">Exig_1989</name>
</gene>